<evidence type="ECO:0000250" key="1"/>
<evidence type="ECO:0000255" key="2"/>
<evidence type="ECO:0000305" key="3"/>
<reference key="1">
    <citation type="journal article" date="2003" name="DNA Res.">
        <title>Complete genome structure of Gloeobacter violaceus PCC 7421, a cyanobacterium that lacks thylakoids.</title>
        <authorList>
            <person name="Nakamura Y."/>
            <person name="Kaneko T."/>
            <person name="Sato S."/>
            <person name="Mimuro M."/>
            <person name="Miyashita H."/>
            <person name="Tsuchiya T."/>
            <person name="Sasamoto S."/>
            <person name="Watanabe A."/>
            <person name="Kawashima K."/>
            <person name="Kishida Y."/>
            <person name="Kiyokawa C."/>
            <person name="Kohara M."/>
            <person name="Matsumoto M."/>
            <person name="Matsuno A."/>
            <person name="Nakazaki N."/>
            <person name="Shimpo S."/>
            <person name="Takeuchi C."/>
            <person name="Yamada M."/>
            <person name="Tabata S."/>
        </authorList>
    </citation>
    <scope>NUCLEOTIDE SEQUENCE [LARGE SCALE GENOMIC DNA]</scope>
    <source>
        <strain>ATCC 29082 / PCC 7421</strain>
    </source>
</reference>
<reference key="2">
    <citation type="journal article" date="2004" name="FEBS Lett.">
        <title>Unique constitution of photosystem I with a novel subunit in the cyanobacterium Gloeobacter violaceus PCC 7421.</title>
        <authorList>
            <person name="Inoue H."/>
            <person name="Tsuchiya T."/>
            <person name="Satoh S."/>
            <person name="Miyashita H."/>
            <person name="Kaneko T."/>
            <person name="Tabata S."/>
            <person name="Tanaka A."/>
            <person name="Mimuro M."/>
        </authorList>
    </citation>
    <scope>IDENTIFICATION BY MASS SPECTROMETRY</scope>
    <scope>CHARACTERIZATION OF PHOTOSYSTEM I</scope>
    <source>
        <strain>ATCC 29082 / PCC 7421</strain>
    </source>
</reference>
<comment type="function">
    <text>PsaA and PsaB bind P700, the primary electron donor of photosystem I (PSI), as well as the electron acceptors A0, A1 and FX. PSI is a plastocyanin/cytochrome c6-ferredoxin oxidoreductase, converting photonic excitation into a charge separation, which transfers an electron from the donor P700 chlorophyll pair to the spectroscopically characterized acceptors A0, A1, FX, FA and FB in turn. Oxidized P700 is reduced on the lumenal side of the thylakoid membrane by plastocyanin or cytochrome c6.</text>
</comment>
<comment type="catalytic activity">
    <reaction>
        <text>reduced [plastocyanin] + hnu + oxidized [2Fe-2S]-[ferredoxin] = oxidized [plastocyanin] + reduced [2Fe-2S]-[ferredoxin]</text>
        <dbReference type="Rhea" id="RHEA:30407"/>
        <dbReference type="Rhea" id="RHEA-COMP:10000"/>
        <dbReference type="Rhea" id="RHEA-COMP:10001"/>
        <dbReference type="Rhea" id="RHEA-COMP:10039"/>
        <dbReference type="Rhea" id="RHEA-COMP:10040"/>
        <dbReference type="ChEBI" id="CHEBI:29036"/>
        <dbReference type="ChEBI" id="CHEBI:30212"/>
        <dbReference type="ChEBI" id="CHEBI:33737"/>
        <dbReference type="ChEBI" id="CHEBI:33738"/>
        <dbReference type="ChEBI" id="CHEBI:49552"/>
        <dbReference type="EC" id="1.97.1.12"/>
    </reaction>
</comment>
<comment type="cofactor">
    <text evidence="1">PSI electron transfer chain: 5 chlorophyll a, 1 chlorophyll a', 2 phylloquinones and 3 4Fe-4S clusters. PSI core antenna: 90 chlorophyll a, 22 carotenoids, 3 phospholipids and 1 galactolipid. P700 is a chlorophyll a/chlorophyll a' dimer, A0 is one or more chlorophyll a, A1 is one or both phylloquinones and FX is a shared 4Fe-4S iron-sulfur center.</text>
</comment>
<comment type="subunit">
    <text>The PsaA/B heterodimer binds the P700 chlorophyll special pair and subsequent electron acceptors. PSI consists of a core antenna complex that captures photons, and an electron transfer chain that converts photonic excitation into a charge separation. The G.violaceus PSI reaction center is composed of one copy each of PsaA,B,C,D,E,F,L,M and Z, and forms trimeric complexes.</text>
</comment>
<comment type="subcellular location">
    <subcellularLocation>
        <location>Cell inner membrane</location>
        <topology>Multi-pass membrane protein</topology>
    </subcellularLocation>
</comment>
<comment type="similarity">
    <text evidence="3">Belongs to the PsaA/PsaB family.</text>
</comment>
<sequence length="783" mass="86419">MSTTPQEREKPVRVLVDNDPVPTSTEKWGKPGWFERNLARGPKTTTWIWDLHALAHDFETHTSDKEEISRKIFSAHFGHLAVVCVWLSGMFWHGAYFSNFTAWMENPLGLKPSAQTVWPVFGQEILNDPSTVAKGFEQGGIVITSGLFHLWRAVGFTTTGQLAAMSIAMLIIAALFLFAGWFHYHKRAPKLEWFQNVESMLNHHLAGLFGLGSLFWTGHLIHVALPVKAQLDAGIAPAQVNPFAGLDYGLMGQYFPKGFGPNGGLGAFFTLNWGQFTDFLTFKGGLEPATGALYLTDIAHHHLAIATLFIIAGHMYRTNWGIGHSIKEMLEAHKGPLTGEGHRGLYEVLTTSWHAQLAINLAMAGSITIIVAHHMYAMNPYPYMGTDYATQISLFTHHMWIGGFLIVGAGAHAAIFMVRDYDPVTNQNNLLDRVLRHRDAIISHLNWVTLFLGFHSFGLYVHNDTMQALGRPRDMFADFAIPLQPVFAQWIQNIHAAAPGGATAPWVGGTSPTWYTGALSSAATLQANQVLALANDKISISPIHLGTADFMVHHIFALCIHVTVLILLKGVLFARSSRLIPDKANLGFRFPCDGPGRGGTCQSSAWDHVFLGLFWMYNTISVVIFHFSWKMQSDVWGTVDRSTGAVNHIIGNTDVLLGGQTVALSQYAASSININGWLRDFLWAQSSAVINSYGGPLSAYGLMFLGAHFIWAFSLMFLFSGRGYWQELIESIVWAHNKLKVAPAIQPRALSITQGRAVGVAHYLLGGIATTWAFFLARFLALP</sequence>
<gene>
    <name type="primary">psaA</name>
    <name type="ordered locus">glr3438</name>
</gene>
<feature type="chain" id="PRO_0000088585" description="Photosystem I P700 chlorophyll a apoprotein A1">
    <location>
        <begin position="1"/>
        <end position="783"/>
    </location>
</feature>
<feature type="transmembrane region" description="Helical; Name=I" evidence="2">
    <location>
        <begin position="72"/>
        <end position="95"/>
    </location>
</feature>
<feature type="transmembrane region" description="Helical; Name=II" evidence="2">
    <location>
        <begin position="162"/>
        <end position="185"/>
    </location>
</feature>
<feature type="transmembrane region" description="Helical; Name=III" evidence="2">
    <location>
        <begin position="201"/>
        <end position="225"/>
    </location>
</feature>
<feature type="transmembrane region" description="Helical; Name=IV" evidence="2">
    <location>
        <begin position="298"/>
        <end position="316"/>
    </location>
</feature>
<feature type="transmembrane region" description="Helical; Name=V" evidence="2">
    <location>
        <begin position="353"/>
        <end position="376"/>
    </location>
</feature>
<feature type="transmembrane region" description="Helical; Name=VI" evidence="2">
    <location>
        <begin position="392"/>
        <end position="418"/>
    </location>
</feature>
<feature type="transmembrane region" description="Helical; Name=VII" evidence="2">
    <location>
        <begin position="440"/>
        <end position="462"/>
    </location>
</feature>
<feature type="transmembrane region" description="Helical; Name=VIII" evidence="2">
    <location>
        <begin position="550"/>
        <end position="568"/>
    </location>
</feature>
<feature type="transmembrane region" description="Helical; Name=IX" evidence="2">
    <location>
        <begin position="608"/>
        <end position="629"/>
    </location>
</feature>
<feature type="transmembrane region" description="Helical; Name=X" evidence="2">
    <location>
        <begin position="697"/>
        <end position="719"/>
    </location>
</feature>
<feature type="transmembrane region" description="Helical; Name=XI" evidence="2">
    <location>
        <begin position="757"/>
        <end position="777"/>
    </location>
</feature>
<feature type="binding site" evidence="1">
    <location>
        <position position="592"/>
    </location>
    <ligand>
        <name>[4Fe-4S] cluster</name>
        <dbReference type="ChEBI" id="CHEBI:49883"/>
        <note>ligand shared between dimeric partners</note>
    </ligand>
</feature>
<feature type="binding site" evidence="1">
    <location>
        <position position="601"/>
    </location>
    <ligand>
        <name>[4Fe-4S] cluster</name>
        <dbReference type="ChEBI" id="CHEBI:49883"/>
        <note>ligand shared between dimeric partners</note>
    </ligand>
</feature>
<feature type="binding site" description="axial binding residue" evidence="1">
    <location>
        <position position="708"/>
    </location>
    <ligand>
        <name>chlorophyll a'</name>
        <dbReference type="ChEBI" id="CHEBI:189419"/>
        <label>A1</label>
    </ligand>
    <ligandPart>
        <name>Mg</name>
        <dbReference type="ChEBI" id="CHEBI:25107"/>
    </ligandPart>
</feature>
<feature type="binding site" description="axial binding residue" evidence="1">
    <location>
        <position position="716"/>
    </location>
    <ligand>
        <name>chlorophyll a</name>
        <dbReference type="ChEBI" id="CHEBI:58416"/>
        <label>A3</label>
    </ligand>
    <ligandPart>
        <name>Mg</name>
        <dbReference type="ChEBI" id="CHEBI:25107"/>
    </ligandPart>
</feature>
<feature type="binding site" evidence="1">
    <location>
        <position position="724"/>
    </location>
    <ligand>
        <name>chlorophyll a</name>
        <dbReference type="ChEBI" id="CHEBI:58416"/>
        <label>A3</label>
    </ligand>
</feature>
<feature type="binding site" evidence="1">
    <location>
        <position position="725"/>
    </location>
    <ligand>
        <name>phylloquinone</name>
        <dbReference type="ChEBI" id="CHEBI:18067"/>
        <label>A</label>
    </ligand>
</feature>
<protein>
    <recommendedName>
        <fullName>Photosystem I P700 chlorophyll a apoprotein A1</fullName>
        <ecNumber>1.97.1.12</ecNumber>
    </recommendedName>
    <alternativeName>
        <fullName>PsaA</fullName>
    </alternativeName>
</protein>
<proteinExistence type="evidence at protein level"/>
<accession>Q7NFT6</accession>
<dbReference type="EC" id="1.97.1.12"/>
<dbReference type="EMBL" id="BA000045">
    <property type="protein sequence ID" value="BAC91379.1"/>
    <property type="molecule type" value="Genomic_DNA"/>
</dbReference>
<dbReference type="RefSeq" id="NP_926384.1">
    <property type="nucleotide sequence ID" value="NC_005125.1"/>
</dbReference>
<dbReference type="RefSeq" id="WP_011143427.1">
    <property type="nucleotide sequence ID" value="NC_005125.1"/>
</dbReference>
<dbReference type="PDB" id="7F4V">
    <property type="method" value="EM"/>
    <property type="resolution" value="2.04 A"/>
    <property type="chains" value="aA/bA/cA=1-783"/>
</dbReference>
<dbReference type="PDBsum" id="7F4V"/>
<dbReference type="EMDB" id="EMD-31455"/>
<dbReference type="SMR" id="Q7NFT6"/>
<dbReference type="STRING" id="251221.gene:10760950"/>
<dbReference type="EnsemblBacteria" id="BAC91379">
    <property type="protein sequence ID" value="BAC91379"/>
    <property type="gene ID" value="BAC91379"/>
</dbReference>
<dbReference type="KEGG" id="gvi:glr3438"/>
<dbReference type="PATRIC" id="fig|251221.4.peg.3470"/>
<dbReference type="eggNOG" id="COG2885">
    <property type="taxonomic scope" value="Bacteria"/>
</dbReference>
<dbReference type="HOGENOM" id="CLU_016126_1_0_3"/>
<dbReference type="InParanoid" id="Q7NFT6"/>
<dbReference type="OrthoDB" id="499313at2"/>
<dbReference type="PhylomeDB" id="Q7NFT6"/>
<dbReference type="Proteomes" id="UP000000557">
    <property type="component" value="Chromosome"/>
</dbReference>
<dbReference type="GO" id="GO:0009522">
    <property type="term" value="C:photosystem I"/>
    <property type="evidence" value="ECO:0007669"/>
    <property type="project" value="UniProtKB-KW"/>
</dbReference>
<dbReference type="GO" id="GO:0005886">
    <property type="term" value="C:plasma membrane"/>
    <property type="evidence" value="ECO:0007669"/>
    <property type="project" value="UniProtKB-SubCell"/>
</dbReference>
<dbReference type="GO" id="GO:0051539">
    <property type="term" value="F:4 iron, 4 sulfur cluster binding"/>
    <property type="evidence" value="ECO:0007669"/>
    <property type="project" value="UniProtKB-KW"/>
</dbReference>
<dbReference type="GO" id="GO:0016168">
    <property type="term" value="F:chlorophyll binding"/>
    <property type="evidence" value="ECO:0007669"/>
    <property type="project" value="UniProtKB-KW"/>
</dbReference>
<dbReference type="GO" id="GO:0009055">
    <property type="term" value="F:electron transfer activity"/>
    <property type="evidence" value="ECO:0007669"/>
    <property type="project" value="UniProtKB-UniRule"/>
</dbReference>
<dbReference type="GO" id="GO:0000287">
    <property type="term" value="F:magnesium ion binding"/>
    <property type="evidence" value="ECO:0007669"/>
    <property type="project" value="UniProtKB-UniRule"/>
</dbReference>
<dbReference type="GO" id="GO:0016491">
    <property type="term" value="F:oxidoreductase activity"/>
    <property type="evidence" value="ECO:0007669"/>
    <property type="project" value="UniProtKB-KW"/>
</dbReference>
<dbReference type="GO" id="GO:0015979">
    <property type="term" value="P:photosynthesis"/>
    <property type="evidence" value="ECO:0007669"/>
    <property type="project" value="UniProtKB-UniRule"/>
</dbReference>
<dbReference type="Gene3D" id="1.20.1130.10">
    <property type="entry name" value="Photosystem I PsaA/PsaB"/>
    <property type="match status" value="1"/>
</dbReference>
<dbReference type="HAMAP" id="MF_00458">
    <property type="entry name" value="PSI_PsaA"/>
    <property type="match status" value="1"/>
</dbReference>
<dbReference type="InterPro" id="IPR006243">
    <property type="entry name" value="PSI_PsaA"/>
</dbReference>
<dbReference type="InterPro" id="IPR001280">
    <property type="entry name" value="PSI_PsaA/B"/>
</dbReference>
<dbReference type="InterPro" id="IPR020586">
    <property type="entry name" value="PSI_PsaA/B_CS"/>
</dbReference>
<dbReference type="InterPro" id="IPR036408">
    <property type="entry name" value="PSI_PsaA/B_sf"/>
</dbReference>
<dbReference type="NCBIfam" id="TIGR01335">
    <property type="entry name" value="psaA"/>
    <property type="match status" value="1"/>
</dbReference>
<dbReference type="PANTHER" id="PTHR30128">
    <property type="entry name" value="OUTER MEMBRANE PROTEIN, OMPA-RELATED"/>
    <property type="match status" value="1"/>
</dbReference>
<dbReference type="PANTHER" id="PTHR30128:SF19">
    <property type="entry name" value="PHOTOSYSTEM I P700 CHLOROPHYLL A APOPROTEIN A1-RELATED"/>
    <property type="match status" value="1"/>
</dbReference>
<dbReference type="Pfam" id="PF00223">
    <property type="entry name" value="PsaA_PsaB"/>
    <property type="match status" value="1"/>
</dbReference>
<dbReference type="PIRSF" id="PIRSF002905">
    <property type="entry name" value="PSI_A"/>
    <property type="match status" value="1"/>
</dbReference>
<dbReference type="PRINTS" id="PR00257">
    <property type="entry name" value="PHOTSYSPSAAB"/>
</dbReference>
<dbReference type="SUPFAM" id="SSF81558">
    <property type="entry name" value="Photosystem I subunits PsaA/PsaB"/>
    <property type="match status" value="1"/>
</dbReference>
<dbReference type="PROSITE" id="PS00419">
    <property type="entry name" value="PHOTOSYSTEM_I_PSAAB"/>
    <property type="match status" value="1"/>
</dbReference>
<keyword id="KW-0002">3D-structure</keyword>
<keyword id="KW-0004">4Fe-4S</keyword>
<keyword id="KW-0997">Cell inner membrane</keyword>
<keyword id="KW-1003">Cell membrane</keyword>
<keyword id="KW-0148">Chlorophyll</keyword>
<keyword id="KW-0157">Chromophore</keyword>
<keyword id="KW-0249">Electron transport</keyword>
<keyword id="KW-0408">Iron</keyword>
<keyword id="KW-0411">Iron-sulfur</keyword>
<keyword id="KW-0460">Magnesium</keyword>
<keyword id="KW-0472">Membrane</keyword>
<keyword id="KW-0479">Metal-binding</keyword>
<keyword id="KW-0560">Oxidoreductase</keyword>
<keyword id="KW-0602">Photosynthesis</keyword>
<keyword id="KW-0603">Photosystem I</keyword>
<keyword id="KW-1185">Reference proteome</keyword>
<keyword id="KW-0812">Transmembrane</keyword>
<keyword id="KW-1133">Transmembrane helix</keyword>
<keyword id="KW-0813">Transport</keyword>
<organism>
    <name type="scientific">Gloeobacter violaceus (strain ATCC 29082 / PCC 7421)</name>
    <dbReference type="NCBI Taxonomy" id="251221"/>
    <lineage>
        <taxon>Bacteria</taxon>
        <taxon>Bacillati</taxon>
        <taxon>Cyanobacteriota</taxon>
        <taxon>Cyanophyceae</taxon>
        <taxon>Gloeobacterales</taxon>
        <taxon>Gloeobacteraceae</taxon>
        <taxon>Gloeobacter</taxon>
    </lineage>
</organism>
<name>PSAA_GLOVI</name>